<evidence type="ECO:0000255" key="1">
    <source>
        <dbReference type="HAMAP-Rule" id="MF_01719"/>
    </source>
</evidence>
<sequence length="344" mass="37608">MIEINQVNKVFYQGSKEIHALKDINLHIAEGTIFGVIGSSGAGKSTLIRCVNMLEAPTSGSIVVDGVDLTKLSKKQLSETRRNIGMIFQHFNLLSSRTVFDNVALPLELAGKDKEQIQSKVTELLKLVGLADKHESYPANLSGGQKQRVAIARALASDPKVLLCDEATSALDPATTQSILELLKEINRKLKITILLITHEMDVVKSICHEVAIIGGGELVEKGTVGEIFAHPKTELAHDFIRSTLDLSIPEDYQARLQPTRVAGSYPLVRLEFTGATVDAPLVSQISRKYNIDISILSSDLDYAGGVKFGMMVAELFGNEEDDNAAIEYLREHNVKVEVLGYVL</sequence>
<gene>
    <name evidence="1" type="primary">metN</name>
    <name type="ordered locus">VV0892</name>
</gene>
<dbReference type="EC" id="7.4.2.11" evidence="1"/>
<dbReference type="EMBL" id="BA000037">
    <property type="protein sequence ID" value="BAC93656.1"/>
    <property type="molecule type" value="Genomic_DNA"/>
</dbReference>
<dbReference type="RefSeq" id="WP_011149699.1">
    <property type="nucleotide sequence ID" value="NC_005139.1"/>
</dbReference>
<dbReference type="SMR" id="Q7MN25"/>
<dbReference type="STRING" id="672.VV93_v1c08290"/>
<dbReference type="KEGG" id="vvy:VV0892"/>
<dbReference type="PATRIC" id="fig|196600.6.peg.896"/>
<dbReference type="eggNOG" id="COG1135">
    <property type="taxonomic scope" value="Bacteria"/>
</dbReference>
<dbReference type="HOGENOM" id="CLU_000604_1_3_6"/>
<dbReference type="Proteomes" id="UP000002675">
    <property type="component" value="Chromosome I"/>
</dbReference>
<dbReference type="GO" id="GO:0009276">
    <property type="term" value="C:Gram-negative-bacterium-type cell wall"/>
    <property type="evidence" value="ECO:0007669"/>
    <property type="project" value="InterPro"/>
</dbReference>
<dbReference type="GO" id="GO:0005886">
    <property type="term" value="C:plasma membrane"/>
    <property type="evidence" value="ECO:0007669"/>
    <property type="project" value="UniProtKB-SubCell"/>
</dbReference>
<dbReference type="GO" id="GO:0033232">
    <property type="term" value="F:ABC-type D-methionine transporter activity"/>
    <property type="evidence" value="ECO:0007669"/>
    <property type="project" value="UniProtKB-EC"/>
</dbReference>
<dbReference type="GO" id="GO:0005524">
    <property type="term" value="F:ATP binding"/>
    <property type="evidence" value="ECO:0007669"/>
    <property type="project" value="UniProtKB-KW"/>
</dbReference>
<dbReference type="GO" id="GO:0016887">
    <property type="term" value="F:ATP hydrolysis activity"/>
    <property type="evidence" value="ECO:0007669"/>
    <property type="project" value="InterPro"/>
</dbReference>
<dbReference type="CDD" id="cd03258">
    <property type="entry name" value="ABC_MetN_methionine_transporter"/>
    <property type="match status" value="1"/>
</dbReference>
<dbReference type="FunFam" id="3.40.50.300:FF:000233">
    <property type="entry name" value="Methionine import ATP-binding protein MetN"/>
    <property type="match status" value="1"/>
</dbReference>
<dbReference type="Gene3D" id="3.30.70.260">
    <property type="match status" value="1"/>
</dbReference>
<dbReference type="Gene3D" id="3.40.50.300">
    <property type="entry name" value="P-loop containing nucleotide triphosphate hydrolases"/>
    <property type="match status" value="1"/>
</dbReference>
<dbReference type="InterPro" id="IPR003593">
    <property type="entry name" value="AAA+_ATPase"/>
</dbReference>
<dbReference type="InterPro" id="IPR012692">
    <property type="entry name" value="ABC_MetN_proteobac"/>
</dbReference>
<dbReference type="InterPro" id="IPR003439">
    <property type="entry name" value="ABC_transporter-like_ATP-bd"/>
</dbReference>
<dbReference type="InterPro" id="IPR017871">
    <property type="entry name" value="ABC_transporter-like_CS"/>
</dbReference>
<dbReference type="InterPro" id="IPR045865">
    <property type="entry name" value="ACT-like_dom_sf"/>
</dbReference>
<dbReference type="InterPro" id="IPR041701">
    <property type="entry name" value="MetN_ABC"/>
</dbReference>
<dbReference type="InterPro" id="IPR050086">
    <property type="entry name" value="MetN_ABC_transporter-like"/>
</dbReference>
<dbReference type="InterPro" id="IPR018449">
    <property type="entry name" value="NIL_domain"/>
</dbReference>
<dbReference type="InterPro" id="IPR027417">
    <property type="entry name" value="P-loop_NTPase"/>
</dbReference>
<dbReference type="NCBIfam" id="TIGR02314">
    <property type="entry name" value="ABC_MetN"/>
    <property type="match status" value="1"/>
</dbReference>
<dbReference type="PANTHER" id="PTHR43166">
    <property type="entry name" value="AMINO ACID IMPORT ATP-BINDING PROTEIN"/>
    <property type="match status" value="1"/>
</dbReference>
<dbReference type="PANTHER" id="PTHR43166:SF30">
    <property type="entry name" value="METHIONINE IMPORT ATP-BINDING PROTEIN METN"/>
    <property type="match status" value="1"/>
</dbReference>
<dbReference type="Pfam" id="PF00005">
    <property type="entry name" value="ABC_tran"/>
    <property type="match status" value="1"/>
</dbReference>
<dbReference type="Pfam" id="PF09383">
    <property type="entry name" value="NIL"/>
    <property type="match status" value="1"/>
</dbReference>
<dbReference type="SMART" id="SM00382">
    <property type="entry name" value="AAA"/>
    <property type="match status" value="1"/>
</dbReference>
<dbReference type="SMART" id="SM00930">
    <property type="entry name" value="NIL"/>
    <property type="match status" value="1"/>
</dbReference>
<dbReference type="SUPFAM" id="SSF55021">
    <property type="entry name" value="ACT-like"/>
    <property type="match status" value="1"/>
</dbReference>
<dbReference type="SUPFAM" id="SSF52540">
    <property type="entry name" value="P-loop containing nucleoside triphosphate hydrolases"/>
    <property type="match status" value="1"/>
</dbReference>
<dbReference type="PROSITE" id="PS00211">
    <property type="entry name" value="ABC_TRANSPORTER_1"/>
    <property type="match status" value="1"/>
</dbReference>
<dbReference type="PROSITE" id="PS50893">
    <property type="entry name" value="ABC_TRANSPORTER_2"/>
    <property type="match status" value="1"/>
</dbReference>
<dbReference type="PROSITE" id="PS51264">
    <property type="entry name" value="METN"/>
    <property type="match status" value="1"/>
</dbReference>
<comment type="function">
    <text evidence="1">Part of the ABC transporter complex MetNIQ involved in methionine import. Responsible for energy coupling to the transport system.</text>
</comment>
<comment type="catalytic activity">
    <reaction evidence="1">
        <text>L-methionine(out) + ATP + H2O = L-methionine(in) + ADP + phosphate + H(+)</text>
        <dbReference type="Rhea" id="RHEA:29779"/>
        <dbReference type="ChEBI" id="CHEBI:15377"/>
        <dbReference type="ChEBI" id="CHEBI:15378"/>
        <dbReference type="ChEBI" id="CHEBI:30616"/>
        <dbReference type="ChEBI" id="CHEBI:43474"/>
        <dbReference type="ChEBI" id="CHEBI:57844"/>
        <dbReference type="ChEBI" id="CHEBI:456216"/>
        <dbReference type="EC" id="7.4.2.11"/>
    </reaction>
</comment>
<comment type="catalytic activity">
    <reaction evidence="1">
        <text>D-methionine(out) + ATP + H2O = D-methionine(in) + ADP + phosphate + H(+)</text>
        <dbReference type="Rhea" id="RHEA:29767"/>
        <dbReference type="ChEBI" id="CHEBI:15377"/>
        <dbReference type="ChEBI" id="CHEBI:15378"/>
        <dbReference type="ChEBI" id="CHEBI:30616"/>
        <dbReference type="ChEBI" id="CHEBI:43474"/>
        <dbReference type="ChEBI" id="CHEBI:57932"/>
        <dbReference type="ChEBI" id="CHEBI:456216"/>
        <dbReference type="EC" id="7.4.2.11"/>
    </reaction>
</comment>
<comment type="subunit">
    <text evidence="1">The complex is composed of two ATP-binding proteins (MetN), two transmembrane proteins (MetI) and a solute-binding protein (MetQ).</text>
</comment>
<comment type="subcellular location">
    <subcellularLocation>
        <location evidence="1">Cell inner membrane</location>
        <topology evidence="1">Peripheral membrane protein</topology>
    </subcellularLocation>
</comment>
<comment type="similarity">
    <text evidence="1">Belongs to the ABC transporter superfamily. Methionine importer (TC 3.A.1.24) family.</text>
</comment>
<reference key="1">
    <citation type="journal article" date="2003" name="Genome Res.">
        <title>Comparative genome analysis of Vibrio vulnificus, a marine pathogen.</title>
        <authorList>
            <person name="Chen C.-Y."/>
            <person name="Wu K.-M."/>
            <person name="Chang Y.-C."/>
            <person name="Chang C.-H."/>
            <person name="Tsai H.-C."/>
            <person name="Liao T.-L."/>
            <person name="Liu Y.-M."/>
            <person name="Chen H.-J."/>
            <person name="Shen A.B.-T."/>
            <person name="Li J.-C."/>
            <person name="Su T.-L."/>
            <person name="Shao C.-P."/>
            <person name="Lee C.-T."/>
            <person name="Hor L.-I."/>
            <person name="Tsai S.-F."/>
        </authorList>
    </citation>
    <scope>NUCLEOTIDE SEQUENCE [LARGE SCALE GENOMIC DNA]</scope>
    <source>
        <strain>YJ016</strain>
    </source>
</reference>
<protein>
    <recommendedName>
        <fullName evidence="1">Methionine import ATP-binding protein MetN</fullName>
        <ecNumber evidence="1">7.4.2.11</ecNumber>
    </recommendedName>
</protein>
<organism>
    <name type="scientific">Vibrio vulnificus (strain YJ016)</name>
    <dbReference type="NCBI Taxonomy" id="196600"/>
    <lineage>
        <taxon>Bacteria</taxon>
        <taxon>Pseudomonadati</taxon>
        <taxon>Pseudomonadota</taxon>
        <taxon>Gammaproteobacteria</taxon>
        <taxon>Vibrionales</taxon>
        <taxon>Vibrionaceae</taxon>
        <taxon>Vibrio</taxon>
    </lineage>
</organism>
<feature type="chain" id="PRO_0000270437" description="Methionine import ATP-binding protein MetN">
    <location>
        <begin position="1"/>
        <end position="344"/>
    </location>
</feature>
<feature type="domain" description="ABC transporter" evidence="1">
    <location>
        <begin position="2"/>
        <end position="241"/>
    </location>
</feature>
<feature type="binding site" evidence="1">
    <location>
        <begin position="38"/>
        <end position="45"/>
    </location>
    <ligand>
        <name>ATP</name>
        <dbReference type="ChEBI" id="CHEBI:30616"/>
    </ligand>
</feature>
<keyword id="KW-0029">Amino-acid transport</keyword>
<keyword id="KW-0067">ATP-binding</keyword>
<keyword id="KW-0997">Cell inner membrane</keyword>
<keyword id="KW-1003">Cell membrane</keyword>
<keyword id="KW-0472">Membrane</keyword>
<keyword id="KW-0547">Nucleotide-binding</keyword>
<keyword id="KW-1278">Translocase</keyword>
<keyword id="KW-0813">Transport</keyword>
<name>METN_VIBVY</name>
<proteinExistence type="inferred from homology"/>
<accession>Q7MN25</accession>